<reference key="1">
    <citation type="submission" date="2009-03" db="EMBL/GenBank/DDBJ databases">
        <title>Complete genome sequence of Edwardsiella ictaluri 93-146.</title>
        <authorList>
            <person name="Williams M.L."/>
            <person name="Gillaspy A.F."/>
            <person name="Dyer D.W."/>
            <person name="Thune R.L."/>
            <person name="Waldbieser G.C."/>
            <person name="Schuster S.C."/>
            <person name="Gipson J."/>
            <person name="Zaitshik J."/>
            <person name="Landry C."/>
            <person name="Lawrence M.L."/>
        </authorList>
    </citation>
    <scope>NUCLEOTIDE SEQUENCE [LARGE SCALE GENOMIC DNA]</scope>
    <source>
        <strain>93-146</strain>
    </source>
</reference>
<sequence>MIIPALDFIDGSVVRLHQGDYGRQRDYDGDALARLLEYQRQGAAQLHLVDLSGARDPARRQLPMLTRLLRALSVPVQVGGGVRSAEDVATLLDAGATRVVVGSTAVRQPQEVARWFTRFGADRLVLALDVRIAANGDKRVAVSGWQEDSGVTLEQTVAHFLPLGLRHVLCTDIACDGTLGGANVALYRQICPRYPQIEFQSSGGIGALQDITALRGSGVQGIIVGRALLEGKFSVKEAIACWQNA</sequence>
<comment type="catalytic activity">
    <reaction evidence="1">
        <text>1-(5-phospho-beta-D-ribosyl)-5-[(5-phospho-beta-D-ribosylamino)methylideneamino]imidazole-4-carboxamide = 5-[(5-phospho-1-deoxy-D-ribulos-1-ylimino)methylamino]-1-(5-phospho-beta-D-ribosyl)imidazole-4-carboxamide</text>
        <dbReference type="Rhea" id="RHEA:15469"/>
        <dbReference type="ChEBI" id="CHEBI:58435"/>
        <dbReference type="ChEBI" id="CHEBI:58525"/>
        <dbReference type="EC" id="5.3.1.16"/>
    </reaction>
</comment>
<comment type="pathway">
    <text evidence="1">Amino-acid biosynthesis; L-histidine biosynthesis; L-histidine from 5-phospho-alpha-D-ribose 1-diphosphate: step 4/9.</text>
</comment>
<comment type="subcellular location">
    <subcellularLocation>
        <location evidence="1">Cytoplasm</location>
    </subcellularLocation>
</comment>
<comment type="similarity">
    <text evidence="1">Belongs to the HisA/HisF family.</text>
</comment>
<gene>
    <name evidence="1" type="primary">hisA</name>
    <name type="ordered locus">NT01EI_2569</name>
</gene>
<accession>C5BG15</accession>
<protein>
    <recommendedName>
        <fullName evidence="1">1-(5-phosphoribosyl)-5-[(5-phosphoribosylamino)methylideneamino] imidazole-4-carboxamide isomerase</fullName>
        <ecNumber evidence="1">5.3.1.16</ecNumber>
    </recommendedName>
    <alternativeName>
        <fullName evidence="1">Phosphoribosylformimino-5-aminoimidazole carboxamide ribotide isomerase</fullName>
    </alternativeName>
</protein>
<keyword id="KW-0028">Amino-acid biosynthesis</keyword>
<keyword id="KW-0963">Cytoplasm</keyword>
<keyword id="KW-0368">Histidine biosynthesis</keyword>
<keyword id="KW-0413">Isomerase</keyword>
<name>HIS4_EDWI9</name>
<feature type="chain" id="PRO_1000213227" description="1-(5-phosphoribosyl)-5-[(5-phosphoribosylamino)methylideneamino] imidazole-4-carboxamide isomerase">
    <location>
        <begin position="1"/>
        <end position="245"/>
    </location>
</feature>
<feature type="active site" description="Proton acceptor" evidence="1">
    <location>
        <position position="7"/>
    </location>
</feature>
<feature type="active site" description="Proton donor" evidence="1">
    <location>
        <position position="129"/>
    </location>
</feature>
<evidence type="ECO:0000255" key="1">
    <source>
        <dbReference type="HAMAP-Rule" id="MF_01014"/>
    </source>
</evidence>
<organism>
    <name type="scientific">Edwardsiella ictaluri (strain 93-146)</name>
    <dbReference type="NCBI Taxonomy" id="634503"/>
    <lineage>
        <taxon>Bacteria</taxon>
        <taxon>Pseudomonadati</taxon>
        <taxon>Pseudomonadota</taxon>
        <taxon>Gammaproteobacteria</taxon>
        <taxon>Enterobacterales</taxon>
        <taxon>Hafniaceae</taxon>
        <taxon>Edwardsiella</taxon>
    </lineage>
</organism>
<dbReference type="EC" id="5.3.1.16" evidence="1"/>
<dbReference type="EMBL" id="CP001600">
    <property type="protein sequence ID" value="ACR69738.1"/>
    <property type="molecule type" value="Genomic_DNA"/>
</dbReference>
<dbReference type="RefSeq" id="WP_015871848.1">
    <property type="nucleotide sequence ID" value="NZ_CP169062.1"/>
</dbReference>
<dbReference type="SMR" id="C5BG15"/>
<dbReference type="STRING" id="67780.B6E78_04905"/>
<dbReference type="GeneID" id="69539473"/>
<dbReference type="KEGG" id="eic:NT01EI_2569"/>
<dbReference type="PATRIC" id="fig|634503.3.peg.2287"/>
<dbReference type="HOGENOM" id="CLU_048577_1_2_6"/>
<dbReference type="OrthoDB" id="9807749at2"/>
<dbReference type="UniPathway" id="UPA00031">
    <property type="reaction ID" value="UER00009"/>
</dbReference>
<dbReference type="Proteomes" id="UP000001485">
    <property type="component" value="Chromosome"/>
</dbReference>
<dbReference type="GO" id="GO:0005737">
    <property type="term" value="C:cytoplasm"/>
    <property type="evidence" value="ECO:0007669"/>
    <property type="project" value="UniProtKB-SubCell"/>
</dbReference>
<dbReference type="GO" id="GO:0003949">
    <property type="term" value="F:1-(5-phosphoribosyl)-5-[(5-phosphoribosylamino)methylideneamino]imidazole-4-carboxamide isomerase activity"/>
    <property type="evidence" value="ECO:0007669"/>
    <property type="project" value="UniProtKB-UniRule"/>
</dbReference>
<dbReference type="GO" id="GO:0000105">
    <property type="term" value="P:L-histidine biosynthetic process"/>
    <property type="evidence" value="ECO:0007669"/>
    <property type="project" value="UniProtKB-UniRule"/>
</dbReference>
<dbReference type="GO" id="GO:0000162">
    <property type="term" value="P:L-tryptophan biosynthetic process"/>
    <property type="evidence" value="ECO:0007669"/>
    <property type="project" value="TreeGrafter"/>
</dbReference>
<dbReference type="CDD" id="cd04732">
    <property type="entry name" value="HisA"/>
    <property type="match status" value="1"/>
</dbReference>
<dbReference type="FunFam" id="3.20.20.70:FF:000009">
    <property type="entry name" value="1-(5-phosphoribosyl)-5-[(5-phosphoribosylamino)methylideneamino] imidazole-4-carboxamide isomerase"/>
    <property type="match status" value="1"/>
</dbReference>
<dbReference type="Gene3D" id="3.20.20.70">
    <property type="entry name" value="Aldolase class I"/>
    <property type="match status" value="1"/>
</dbReference>
<dbReference type="HAMAP" id="MF_01014">
    <property type="entry name" value="HisA"/>
    <property type="match status" value="1"/>
</dbReference>
<dbReference type="InterPro" id="IPR013785">
    <property type="entry name" value="Aldolase_TIM"/>
</dbReference>
<dbReference type="InterPro" id="IPR006062">
    <property type="entry name" value="His_biosynth"/>
</dbReference>
<dbReference type="InterPro" id="IPR006063">
    <property type="entry name" value="HisA_bact_arch"/>
</dbReference>
<dbReference type="InterPro" id="IPR044524">
    <property type="entry name" value="Isoase_HisA-like"/>
</dbReference>
<dbReference type="InterPro" id="IPR023016">
    <property type="entry name" value="Isoase_HisA-like_bact"/>
</dbReference>
<dbReference type="InterPro" id="IPR011060">
    <property type="entry name" value="RibuloseP-bd_barrel"/>
</dbReference>
<dbReference type="NCBIfam" id="TIGR00007">
    <property type="entry name" value="1-(5-phosphoribosyl)-5-[(5-phosphoribosylamino)methylideneamino]imidazole-4-carboxamide isomerase"/>
    <property type="match status" value="1"/>
</dbReference>
<dbReference type="PANTHER" id="PTHR43090">
    <property type="entry name" value="1-(5-PHOSPHORIBOSYL)-5-[(5-PHOSPHORIBOSYLAMINO)METHYLIDENEAMINO] IMIDAZOLE-4-CARBOXAMIDE ISOMERASE"/>
    <property type="match status" value="1"/>
</dbReference>
<dbReference type="PANTHER" id="PTHR43090:SF2">
    <property type="entry name" value="1-(5-PHOSPHORIBOSYL)-5-[(5-PHOSPHORIBOSYLAMINO)METHYLIDENEAMINO] IMIDAZOLE-4-CARBOXAMIDE ISOMERASE"/>
    <property type="match status" value="1"/>
</dbReference>
<dbReference type="Pfam" id="PF00977">
    <property type="entry name" value="His_biosynth"/>
    <property type="match status" value="1"/>
</dbReference>
<dbReference type="SUPFAM" id="SSF51366">
    <property type="entry name" value="Ribulose-phoshate binding barrel"/>
    <property type="match status" value="1"/>
</dbReference>
<proteinExistence type="inferred from homology"/>